<keyword id="KW-0963">Cytoplasm</keyword>
<keyword id="KW-0967">Endosome</keyword>
<keyword id="KW-0472">Membrane</keyword>
<keyword id="KW-0539">Nucleus</keyword>
<keyword id="KW-0653">Protein transport</keyword>
<keyword id="KW-1185">Reference proteome</keyword>
<keyword id="KW-0813">Transport</keyword>
<evidence type="ECO:0000250" key="1"/>
<evidence type="ECO:0000269" key="2">
    <source>
    </source>
</evidence>
<evidence type="ECO:0000269" key="3">
    <source>
    </source>
</evidence>
<evidence type="ECO:0000269" key="4">
    <source>
    </source>
</evidence>
<evidence type="ECO:0000305" key="5"/>
<accession>O94663</accession>
<sequence>MRKRIGIGALNDDEYLKQYEEVGNELIEQQSDEIASQLSTFQEALKTFAREHATEIKQNSQFRNTFVKLALKIGLDPFVSGSDESAWAAVGMNEFYYQVAVRVIEVCYATQMENGGLLSVSQVCRFLNEENEAFGHEWLRETDVVRAVDSLAPLGPGFVLEKIAGKQYIRSLPLELNTDQNVVLEAVEILGYVTISILRDNYAWERSRCIQVLNDLVSKSLLWIDSQGVEMAYWGASNLIDDQAQRFLYENF</sequence>
<proteinExistence type="inferred from homology"/>
<dbReference type="EMBL" id="CU329671">
    <property type="protein sequence ID" value="CAB37601.1"/>
    <property type="molecule type" value="Genomic_DNA"/>
</dbReference>
<dbReference type="PIR" id="T40604">
    <property type="entry name" value="T40604"/>
</dbReference>
<dbReference type="RefSeq" id="NP_595503.1">
    <property type="nucleotide sequence ID" value="NM_001021413.2"/>
</dbReference>
<dbReference type="SMR" id="O94663"/>
<dbReference type="BioGRID" id="277662">
    <property type="interactions" value="95"/>
</dbReference>
<dbReference type="FunCoup" id="O94663">
    <property type="interactions" value="267"/>
</dbReference>
<dbReference type="IntAct" id="O94663">
    <property type="interactions" value="1"/>
</dbReference>
<dbReference type="STRING" id="284812.O94663"/>
<dbReference type="iPTMnet" id="O94663"/>
<dbReference type="PaxDb" id="4896-SPBC651.05c.1"/>
<dbReference type="EnsemblFungi" id="SPBC651.05c.1">
    <property type="protein sequence ID" value="SPBC651.05c.1:pep"/>
    <property type="gene ID" value="SPBC651.05c"/>
</dbReference>
<dbReference type="GeneID" id="2541147"/>
<dbReference type="KEGG" id="spo:2541147"/>
<dbReference type="PomBase" id="SPBC651.05c">
    <property type="gene designation" value="dot2"/>
</dbReference>
<dbReference type="VEuPathDB" id="FungiDB:SPBC651.05c"/>
<dbReference type="eggNOG" id="KOG3341">
    <property type="taxonomic scope" value="Eukaryota"/>
</dbReference>
<dbReference type="HOGENOM" id="CLU_070147_0_0_1"/>
<dbReference type="InParanoid" id="O94663"/>
<dbReference type="OMA" id="QIVEVCM"/>
<dbReference type="PhylomeDB" id="O94663"/>
<dbReference type="Reactome" id="R-SPO-917729">
    <property type="pathway name" value="Endosomal Sorting Complex Required For Transport (ESCRT)"/>
</dbReference>
<dbReference type="PRO" id="PR:O94663"/>
<dbReference type="Proteomes" id="UP000002485">
    <property type="component" value="Chromosome II"/>
</dbReference>
<dbReference type="GO" id="GO:0005829">
    <property type="term" value="C:cytosol"/>
    <property type="evidence" value="ECO:0007005"/>
    <property type="project" value="PomBase"/>
</dbReference>
<dbReference type="GO" id="GO:0000814">
    <property type="term" value="C:ESCRT II complex"/>
    <property type="evidence" value="ECO:0000318"/>
    <property type="project" value="GO_Central"/>
</dbReference>
<dbReference type="GO" id="GO:0016604">
    <property type="term" value="C:nuclear body"/>
    <property type="evidence" value="ECO:0000314"/>
    <property type="project" value="PomBase"/>
</dbReference>
<dbReference type="GO" id="GO:0005654">
    <property type="term" value="C:nucleoplasm"/>
    <property type="evidence" value="ECO:0000314"/>
    <property type="project" value="PomBase"/>
</dbReference>
<dbReference type="GO" id="GO:0005634">
    <property type="term" value="C:nucleus"/>
    <property type="evidence" value="ECO:0007005"/>
    <property type="project" value="PomBase"/>
</dbReference>
<dbReference type="GO" id="GO:0000742">
    <property type="term" value="P:karyogamy involved in conjugation with cellular fusion"/>
    <property type="evidence" value="ECO:0000315"/>
    <property type="project" value="PomBase"/>
</dbReference>
<dbReference type="GO" id="GO:0045324">
    <property type="term" value="P:late endosome to vacuole transport"/>
    <property type="evidence" value="ECO:0000315"/>
    <property type="project" value="PomBase"/>
</dbReference>
<dbReference type="GO" id="GO:0043328">
    <property type="term" value="P:protein transport to vacuole involved in ubiquitin-dependent protein catabolic process via the multivesicular body sorting pathway"/>
    <property type="evidence" value="ECO:0000315"/>
    <property type="project" value="PomBase"/>
</dbReference>
<dbReference type="FunFam" id="1.10.10.10:FF:000397">
    <property type="entry name" value="Vacuolar-sorting protein SNF8"/>
    <property type="match status" value="1"/>
</dbReference>
<dbReference type="Gene3D" id="6.10.140.180">
    <property type="match status" value="1"/>
</dbReference>
<dbReference type="Gene3D" id="1.10.10.10">
    <property type="entry name" value="Winged helix-like DNA-binding domain superfamily/Winged helix DNA-binding domain"/>
    <property type="match status" value="2"/>
</dbReference>
<dbReference type="InterPro" id="IPR016689">
    <property type="entry name" value="ESCRT-2_cplx_Snf8"/>
</dbReference>
<dbReference type="InterPro" id="IPR040608">
    <property type="entry name" value="Snf8/Vps36"/>
</dbReference>
<dbReference type="InterPro" id="IPR036388">
    <property type="entry name" value="WH-like_DNA-bd_sf"/>
</dbReference>
<dbReference type="InterPro" id="IPR036390">
    <property type="entry name" value="WH_DNA-bd_sf"/>
</dbReference>
<dbReference type="PANTHER" id="PTHR12806">
    <property type="entry name" value="EAP30 SUBUNIT OF ELL COMPLEX"/>
    <property type="match status" value="1"/>
</dbReference>
<dbReference type="PANTHER" id="PTHR12806:SF0">
    <property type="entry name" value="VACUOLAR-SORTING PROTEIN SNF8"/>
    <property type="match status" value="1"/>
</dbReference>
<dbReference type="Pfam" id="PF04157">
    <property type="entry name" value="EAP30"/>
    <property type="match status" value="1"/>
</dbReference>
<dbReference type="PIRSF" id="PIRSF017215">
    <property type="entry name" value="ESCRT2_Vps22"/>
    <property type="match status" value="1"/>
</dbReference>
<dbReference type="SUPFAM" id="SSF46785">
    <property type="entry name" value="Winged helix' DNA-binding domain"/>
    <property type="match status" value="2"/>
</dbReference>
<comment type="function">
    <text evidence="2 3 4">Component of the endosomal sorting complex required for transport II (ESCRT-II), which is required for multivesicular body (MVB) formation and sorting of endosomal cargo proteins into MVBs. The MVB pathway mediates delivery of transmembrane proteins into the lumen of the lysosome for degradation. The ESCRT-II complex is probably involved in the recruitment of the ESCRT-III complex. Negatively regulates meiotic spindle pole body maturation via indirect regulation of the pcp1 gene. Required for efficient entry into pre-meiotic S phase.</text>
</comment>
<comment type="subunit">
    <text evidence="1">Component of the endosomal sorting complex required for transport II (ESCRT-II).</text>
</comment>
<comment type="subcellular location">
    <subcellularLocation>
        <location>Cytoplasm</location>
    </subcellularLocation>
    <subcellularLocation>
        <location>Nucleus</location>
    </subcellularLocation>
    <subcellularLocation>
        <location evidence="1">Endosome membrane</location>
        <topology evidence="1">Peripheral membrane protein</topology>
    </subcellularLocation>
</comment>
<comment type="similarity">
    <text evidence="5">Belongs to the SNF8 family.</text>
</comment>
<feature type="chain" id="PRO_0000362144" description="Vacuolar-sorting protein dot2">
    <location>
        <begin position="1"/>
        <end position="252"/>
    </location>
</feature>
<organism>
    <name type="scientific">Schizosaccharomyces pombe (strain 972 / ATCC 24843)</name>
    <name type="common">Fission yeast</name>
    <dbReference type="NCBI Taxonomy" id="284812"/>
    <lineage>
        <taxon>Eukaryota</taxon>
        <taxon>Fungi</taxon>
        <taxon>Dikarya</taxon>
        <taxon>Ascomycota</taxon>
        <taxon>Taphrinomycotina</taxon>
        <taxon>Schizosaccharomycetes</taxon>
        <taxon>Schizosaccharomycetales</taxon>
        <taxon>Schizosaccharomycetaceae</taxon>
        <taxon>Schizosaccharomyces</taxon>
    </lineage>
</organism>
<reference key="1">
    <citation type="journal article" date="2002" name="Nature">
        <title>The genome sequence of Schizosaccharomyces pombe.</title>
        <authorList>
            <person name="Wood V."/>
            <person name="Gwilliam R."/>
            <person name="Rajandream M.A."/>
            <person name="Lyne M.H."/>
            <person name="Lyne R."/>
            <person name="Stewart A."/>
            <person name="Sgouros J.G."/>
            <person name="Peat N."/>
            <person name="Hayles J."/>
            <person name="Baker S.G."/>
            <person name="Basham D."/>
            <person name="Bowman S."/>
            <person name="Brooks K."/>
            <person name="Brown D."/>
            <person name="Brown S."/>
            <person name="Chillingworth T."/>
            <person name="Churcher C.M."/>
            <person name="Collins M."/>
            <person name="Connor R."/>
            <person name="Cronin A."/>
            <person name="Davis P."/>
            <person name="Feltwell T."/>
            <person name="Fraser A."/>
            <person name="Gentles S."/>
            <person name="Goble A."/>
            <person name="Hamlin N."/>
            <person name="Harris D.E."/>
            <person name="Hidalgo J."/>
            <person name="Hodgson G."/>
            <person name="Holroyd S."/>
            <person name="Hornsby T."/>
            <person name="Howarth S."/>
            <person name="Huckle E.J."/>
            <person name="Hunt S."/>
            <person name="Jagels K."/>
            <person name="James K.D."/>
            <person name="Jones L."/>
            <person name="Jones M."/>
            <person name="Leather S."/>
            <person name="McDonald S."/>
            <person name="McLean J."/>
            <person name="Mooney P."/>
            <person name="Moule S."/>
            <person name="Mungall K.L."/>
            <person name="Murphy L.D."/>
            <person name="Niblett D."/>
            <person name="Odell C."/>
            <person name="Oliver K."/>
            <person name="O'Neil S."/>
            <person name="Pearson D."/>
            <person name="Quail M.A."/>
            <person name="Rabbinowitsch E."/>
            <person name="Rutherford K.M."/>
            <person name="Rutter S."/>
            <person name="Saunders D."/>
            <person name="Seeger K."/>
            <person name="Sharp S."/>
            <person name="Skelton J."/>
            <person name="Simmonds M.N."/>
            <person name="Squares R."/>
            <person name="Squares S."/>
            <person name="Stevens K."/>
            <person name="Taylor K."/>
            <person name="Taylor R.G."/>
            <person name="Tivey A."/>
            <person name="Walsh S.V."/>
            <person name="Warren T."/>
            <person name="Whitehead S."/>
            <person name="Woodward J.R."/>
            <person name="Volckaert G."/>
            <person name="Aert R."/>
            <person name="Robben J."/>
            <person name="Grymonprez B."/>
            <person name="Weltjens I."/>
            <person name="Vanstreels E."/>
            <person name="Rieger M."/>
            <person name="Schaefer M."/>
            <person name="Mueller-Auer S."/>
            <person name="Gabel C."/>
            <person name="Fuchs M."/>
            <person name="Duesterhoeft A."/>
            <person name="Fritzc C."/>
            <person name="Holzer E."/>
            <person name="Moestl D."/>
            <person name="Hilbert H."/>
            <person name="Borzym K."/>
            <person name="Langer I."/>
            <person name="Beck A."/>
            <person name="Lehrach H."/>
            <person name="Reinhardt R."/>
            <person name="Pohl T.M."/>
            <person name="Eger P."/>
            <person name="Zimmermann W."/>
            <person name="Wedler H."/>
            <person name="Wambutt R."/>
            <person name="Purnelle B."/>
            <person name="Goffeau A."/>
            <person name="Cadieu E."/>
            <person name="Dreano S."/>
            <person name="Gloux S."/>
            <person name="Lelaure V."/>
            <person name="Mottier S."/>
            <person name="Galibert F."/>
            <person name="Aves S.J."/>
            <person name="Xiang Z."/>
            <person name="Hunt C."/>
            <person name="Moore K."/>
            <person name="Hurst S.M."/>
            <person name="Lucas M."/>
            <person name="Rochet M."/>
            <person name="Gaillardin C."/>
            <person name="Tallada V.A."/>
            <person name="Garzon A."/>
            <person name="Thode G."/>
            <person name="Daga R.R."/>
            <person name="Cruzado L."/>
            <person name="Jimenez J."/>
            <person name="Sanchez M."/>
            <person name="del Rey F."/>
            <person name="Benito J."/>
            <person name="Dominguez A."/>
            <person name="Revuelta J.L."/>
            <person name="Moreno S."/>
            <person name="Armstrong J."/>
            <person name="Forsburg S.L."/>
            <person name="Cerutti L."/>
            <person name="Lowe T."/>
            <person name="McCombie W.R."/>
            <person name="Paulsen I."/>
            <person name="Potashkin J."/>
            <person name="Shpakovski G.V."/>
            <person name="Ussery D."/>
            <person name="Barrell B.G."/>
            <person name="Nurse P."/>
        </authorList>
    </citation>
    <scope>NUCLEOTIDE SEQUENCE [LARGE SCALE GENOMIC DNA]</scope>
    <source>
        <strain>972 / ATCC 24843</strain>
    </source>
</reference>
<reference key="2">
    <citation type="journal article" date="2002" name="Genetics">
        <title>Fission yeast mutants affecting telomere clustering and meiosis-specific spindle pole body integrity.</title>
        <authorList>
            <person name="Jin Y."/>
            <person name="Uzawa S."/>
            <person name="Cande W.Z."/>
        </authorList>
    </citation>
    <scope>FUNCTION</scope>
</reference>
<reference key="3">
    <citation type="journal article" date="2005" name="Dev. Cell">
        <title>The fission yeast homolog of the human transcription factor EAP30 blocks meiotic spindle pole body amplification.</title>
        <authorList>
            <person name="Jin Y."/>
            <person name="Mancuso J.J."/>
            <person name="Uzawa S."/>
            <person name="Cronembold D."/>
            <person name="Cande W.Z."/>
        </authorList>
    </citation>
    <scope>FUNCTION</scope>
    <scope>SUBCELLULAR LOCATION</scope>
</reference>
<reference key="4">
    <citation type="journal article" date="2006" name="Nat. Biotechnol.">
        <title>ORFeome cloning and global analysis of protein localization in the fission yeast Schizosaccharomyces pombe.</title>
        <authorList>
            <person name="Matsuyama A."/>
            <person name="Arai R."/>
            <person name="Yashiroda Y."/>
            <person name="Shirai A."/>
            <person name="Kamata A."/>
            <person name="Sekido S."/>
            <person name="Kobayashi Y."/>
            <person name="Hashimoto A."/>
            <person name="Hamamoto M."/>
            <person name="Hiraoka Y."/>
            <person name="Horinouchi S."/>
            <person name="Yoshida M."/>
        </authorList>
    </citation>
    <scope>SUBCELLULAR LOCATION [LARGE SCALE ANALYSIS]</scope>
</reference>
<reference key="5">
    <citation type="journal article" date="2007" name="Microbiology">
        <title>Essential roles of class E Vps proteins for sorting into multivesicular bodies in Schizosaccharomyces pombe.</title>
        <authorList>
            <person name="Iwaki T."/>
            <person name="Onishi M."/>
            <person name="Ikeuchi M."/>
            <person name="Kita A."/>
            <person name="Sugiura R."/>
            <person name="Giga-Hama Y."/>
            <person name="Fukui Y."/>
            <person name="Takegawa K."/>
        </authorList>
    </citation>
    <scope>FUNCTION</scope>
</reference>
<name>SNF8_SCHPO</name>
<gene>
    <name type="primary">dot2</name>
    <name type="ORF">SPBC651.05c</name>
</gene>
<protein>
    <recommendedName>
        <fullName>Vacuolar-sorting protein dot2</fullName>
    </recommendedName>
    <alternativeName>
        <fullName>Defective organization of telomere protein 2</fullName>
    </alternativeName>
    <alternativeName>
        <fullName>ELL-associated protein of 30 kDa homolog dot2</fullName>
    </alternativeName>
</protein>